<keyword id="KW-1003">Cell membrane</keyword>
<keyword id="KW-0406">Ion transport</keyword>
<keyword id="KW-0472">Membrane</keyword>
<keyword id="KW-0630">Potassium</keyword>
<keyword id="KW-0633">Potassium transport</keyword>
<keyword id="KW-0812">Transmembrane</keyword>
<keyword id="KW-1133">Transmembrane helix</keyword>
<keyword id="KW-0813">Transport</keyword>
<accession>P0A057</accession>
<accession>Q99QS8</accession>
<accession>Q9LC50</accession>
<accession>Q9XBA7</accession>
<feature type="chain" id="PRO_0000166528" description="Potassium-transporting ATPase potassium-binding subunit 2">
    <location>
        <begin position="1"/>
        <end position="558"/>
    </location>
</feature>
<feature type="transmembrane region" description="Helical" evidence="2">
    <location>
        <begin position="1"/>
        <end position="21"/>
    </location>
</feature>
<feature type="transmembrane region" description="Helical" evidence="2">
    <location>
        <begin position="60"/>
        <end position="80"/>
    </location>
</feature>
<feature type="transmembrane region" description="Helical" evidence="2">
    <location>
        <begin position="129"/>
        <end position="149"/>
    </location>
</feature>
<feature type="transmembrane region" description="Helical" evidence="2">
    <location>
        <begin position="169"/>
        <end position="189"/>
    </location>
</feature>
<feature type="transmembrane region" description="Helical" evidence="2">
    <location>
        <begin position="246"/>
        <end position="266"/>
    </location>
</feature>
<feature type="transmembrane region" description="Helical" evidence="2">
    <location>
        <begin position="281"/>
        <end position="301"/>
    </location>
</feature>
<feature type="transmembrane region" description="Helical" evidence="2">
    <location>
        <begin position="326"/>
        <end position="346"/>
    </location>
</feature>
<feature type="transmembrane region" description="Helical" evidence="2">
    <location>
        <begin position="353"/>
        <end position="373"/>
    </location>
</feature>
<feature type="transmembrane region" description="Helical" evidence="2">
    <location>
        <begin position="376"/>
        <end position="396"/>
    </location>
</feature>
<feature type="transmembrane region" description="Helical" evidence="2">
    <location>
        <begin position="415"/>
        <end position="435"/>
    </location>
</feature>
<feature type="transmembrane region" description="Helical" evidence="2">
    <location>
        <begin position="485"/>
        <end position="505"/>
    </location>
</feature>
<feature type="transmembrane region" description="Helical" evidence="2">
    <location>
        <begin position="523"/>
        <end position="543"/>
    </location>
</feature>
<reference key="1">
    <citation type="journal article" date="1999" name="Antimicrob. Agents Chemother.">
        <title>Cloning and nucleotide sequence determination of the entire mec DNA of pre-methicillin-resistant Staphylococcus aureus N315.</title>
        <authorList>
            <person name="Ito T."/>
            <person name="Katayama Y."/>
            <person name="Hiramatsu K."/>
        </authorList>
    </citation>
    <scope>NUCLEOTIDE SEQUENCE [GENOMIC DNA]</scope>
</reference>
<reference key="2">
    <citation type="submission" date="2001-05" db="EMBL/GenBank/DDBJ databases">
        <authorList>
            <person name="Ito T."/>
            <person name="Katayama Y."/>
            <person name="Hiramatsu K."/>
        </authorList>
    </citation>
    <scope>SEQUENCE REVISION</scope>
</reference>
<reference key="3">
    <citation type="journal article" date="2001" name="Lancet">
        <title>Whole genome sequencing of meticillin-resistant Staphylococcus aureus.</title>
        <authorList>
            <person name="Kuroda M."/>
            <person name="Ohta T."/>
            <person name="Uchiyama I."/>
            <person name="Baba T."/>
            <person name="Yuzawa H."/>
            <person name="Kobayashi I."/>
            <person name="Cui L."/>
            <person name="Oguchi A."/>
            <person name="Aoki K."/>
            <person name="Nagai Y."/>
            <person name="Lian J.-Q."/>
            <person name="Ito T."/>
            <person name="Kanamori M."/>
            <person name="Matsumaru H."/>
            <person name="Maruyama A."/>
            <person name="Murakami H."/>
            <person name="Hosoyama A."/>
            <person name="Mizutani-Ui Y."/>
            <person name="Takahashi N.K."/>
            <person name="Sawano T."/>
            <person name="Inoue R."/>
            <person name="Kaito C."/>
            <person name="Sekimizu K."/>
            <person name="Hirakawa H."/>
            <person name="Kuhara S."/>
            <person name="Goto S."/>
            <person name="Yabuzaki J."/>
            <person name="Kanehisa M."/>
            <person name="Yamashita A."/>
            <person name="Oshima K."/>
            <person name="Furuya K."/>
            <person name="Yoshino C."/>
            <person name="Shiba T."/>
            <person name="Hattori M."/>
            <person name="Ogasawara N."/>
            <person name="Hayashi H."/>
            <person name="Hiramatsu K."/>
        </authorList>
    </citation>
    <scope>NUCLEOTIDE SEQUENCE [LARGE SCALE GENOMIC DNA]</scope>
    <source>
        <strain>N315</strain>
    </source>
</reference>
<reference key="4">
    <citation type="journal article" date="2010" name="Genes Dev.">
        <title>Functional microdomains in bacterial membranes.</title>
        <authorList>
            <person name="Lopez D."/>
            <person name="Kolter R."/>
        </authorList>
    </citation>
    <scope>IDENTIFICATION BY MASS SPECTROMETRY</scope>
    <scope>SUBCELLULAR LOCATION</scope>
</reference>
<comment type="function">
    <text evidence="2">Part of the high-affinity ATP-driven potassium transport (or Kdp) system, which catalyzes the hydrolysis of ATP coupled with the electrogenic transport of potassium into the cytoplasm. This subunit binds the extracellular potassium ions and delivers the ions to the membrane domain of KdpB through an intramembrane tunnel.</text>
</comment>
<comment type="subunit">
    <text evidence="2">The system is composed of three essential subunits: KdpA, KdpB and KdpC.</text>
</comment>
<comment type="subcellular location">
    <subcellularLocation>
        <location evidence="2 3">Cell membrane</location>
        <topology evidence="2">Multi-pass membrane protein</topology>
    </subcellularLocation>
    <subcellularLocation>
        <location evidence="3">Membrane raft</location>
        <topology evidence="1">Multi-pass membrane protein</topology>
    </subcellularLocation>
    <text evidence="3">Present in detergent-resistant membrane (DRM) fractions that may be equivalent to eukaryotic membrane rafts; these rafts include proteins involved in signaling, molecule trafficking and protein secretion.</text>
</comment>
<comment type="similarity">
    <text evidence="2">Belongs to the KdpA family.</text>
</comment>
<proteinExistence type="evidence at protein level"/>
<dbReference type="EMBL" id="D86934">
    <property type="protein sequence ID" value="BAB43902.1"/>
    <property type="molecule type" value="Genomic_DNA"/>
</dbReference>
<dbReference type="EMBL" id="BA000018">
    <property type="protein sequence ID" value="BAB41286.2"/>
    <property type="molecule type" value="Genomic_DNA"/>
</dbReference>
<dbReference type="PIR" id="D89766">
    <property type="entry name" value="D89766"/>
</dbReference>
<dbReference type="RefSeq" id="WP_000029430.1">
    <property type="nucleotide sequence ID" value="NC_002745.2"/>
</dbReference>
<dbReference type="SMR" id="P0A057"/>
<dbReference type="EnsemblBacteria" id="BAB41286">
    <property type="protein sequence ID" value="BAB41286"/>
    <property type="gene ID" value="BAB41286"/>
</dbReference>
<dbReference type="KEGG" id="sau:SA0068"/>
<dbReference type="HOGENOM" id="CLU_018614_3_0_9"/>
<dbReference type="GO" id="GO:0045121">
    <property type="term" value="C:membrane raft"/>
    <property type="evidence" value="ECO:0007669"/>
    <property type="project" value="UniProtKB-SubCell"/>
</dbReference>
<dbReference type="GO" id="GO:0005886">
    <property type="term" value="C:plasma membrane"/>
    <property type="evidence" value="ECO:0007669"/>
    <property type="project" value="UniProtKB-SubCell"/>
</dbReference>
<dbReference type="GO" id="GO:0008556">
    <property type="term" value="F:P-type potassium transmembrane transporter activity"/>
    <property type="evidence" value="ECO:0007669"/>
    <property type="project" value="InterPro"/>
</dbReference>
<dbReference type="GO" id="GO:0030955">
    <property type="term" value="F:potassium ion binding"/>
    <property type="evidence" value="ECO:0007669"/>
    <property type="project" value="UniProtKB-UniRule"/>
</dbReference>
<dbReference type="HAMAP" id="MF_00275">
    <property type="entry name" value="KdpA"/>
    <property type="match status" value="1"/>
</dbReference>
<dbReference type="InterPro" id="IPR004623">
    <property type="entry name" value="KdpA"/>
</dbReference>
<dbReference type="NCBIfam" id="TIGR00680">
    <property type="entry name" value="kdpA"/>
    <property type="match status" value="1"/>
</dbReference>
<dbReference type="PANTHER" id="PTHR30607">
    <property type="entry name" value="POTASSIUM-TRANSPORTING ATPASE A CHAIN"/>
    <property type="match status" value="1"/>
</dbReference>
<dbReference type="PANTHER" id="PTHR30607:SF2">
    <property type="entry name" value="POTASSIUM-TRANSPORTING ATPASE POTASSIUM-BINDING SUBUNIT"/>
    <property type="match status" value="1"/>
</dbReference>
<dbReference type="Pfam" id="PF03814">
    <property type="entry name" value="KdpA"/>
    <property type="match status" value="1"/>
</dbReference>
<dbReference type="PIRSF" id="PIRSF001294">
    <property type="entry name" value="K_ATPaseA"/>
    <property type="match status" value="1"/>
</dbReference>
<evidence type="ECO:0000255" key="1"/>
<evidence type="ECO:0000255" key="2">
    <source>
        <dbReference type="HAMAP-Rule" id="MF_00275"/>
    </source>
</evidence>
<evidence type="ECO:0000269" key="3">
    <source>
    </source>
</evidence>
<gene>
    <name evidence="2" type="primary">kdpA2</name>
    <name type="synonym">kdpA</name>
    <name type="ordered locus">SA0068</name>
</gene>
<organism>
    <name type="scientific">Staphylococcus aureus (strain N315)</name>
    <dbReference type="NCBI Taxonomy" id="158879"/>
    <lineage>
        <taxon>Bacteria</taxon>
        <taxon>Bacillati</taxon>
        <taxon>Bacillota</taxon>
        <taxon>Bacilli</taxon>
        <taxon>Bacillales</taxon>
        <taxon>Staphylococcaceae</taxon>
        <taxon>Staphylococcus</taxon>
    </lineage>
</organism>
<protein>
    <recommendedName>
        <fullName evidence="2">Potassium-transporting ATPase potassium-binding subunit 2</fullName>
    </recommendedName>
    <alternativeName>
        <fullName evidence="2">ATP phosphohydrolase [potassium-transporting] A chain 2</fullName>
    </alternativeName>
    <alternativeName>
        <fullName evidence="2">Potassium-binding and translocating subunit A 2</fullName>
    </alternativeName>
    <alternativeName>
        <fullName evidence="2">Potassium-translocating ATPase A chain 2</fullName>
    </alternativeName>
</protein>
<name>KDPA2_STAAN</name>
<sequence>MSIVLFLIVFILLSLIVSRYLYSVALNVPSKIDVVFNPIEKLIYQLIGTKLEHMSGKTYIKHFLLFNGLMGGLSFVLLLIQQWLFLNPNHNLNQSVSLAFNTMASFLTNTNLQHYAGETDLSYLTQMCVITFLMFTSAASGYAVCIAMLRRLTGMTDVIGNFYQDITRFIVRVLIPFALIISLFLISQGTPQTLKGNLVIETLSGVKQTIAYGPMASLESIKHLGTNGGGFLGANSSTPFENPTYWSNYAEALSMMLIPGSLVFLFGRMLKTKLQIHPHAIMIFVAMFVMFIGFLVTCLYFEFAGNPVLHHLGIAGGNMEGKETRFGIGLSALFTTITTAFTTGTVNNMHDSLTPLGGMVPMVLMMLNAVFGGEGVGLMNMLIYVMLTVFICSLMIGKTPSYLGMKIEGKEMKLIALSFLVHPLLILVFSALAFIVPGASDALTNPQFHGVSQVLYEFTSSSANNGSGFEGLGDNTVFWNISTGIVMLLARYIPIVLQILIVSSLVNKKTYQQHTQDVPINNLFFSSVLIIFIILLSGLTFLPDLMLGPIGEQLLLHA</sequence>